<evidence type="ECO:0000255" key="1">
    <source>
        <dbReference type="HAMAP-Rule" id="MF_00166"/>
    </source>
</evidence>
<reference key="1">
    <citation type="submission" date="2003-06" db="EMBL/GenBank/DDBJ databases">
        <title>The complete genome sequence of Haemophilus ducreyi.</title>
        <authorList>
            <person name="Munson R.S. Jr."/>
            <person name="Ray W.C."/>
            <person name="Mahairas G."/>
            <person name="Sabo P."/>
            <person name="Mungur R."/>
            <person name="Johnson L."/>
            <person name="Nguyen D."/>
            <person name="Wang J."/>
            <person name="Forst C."/>
            <person name="Hood L."/>
        </authorList>
    </citation>
    <scope>NUCLEOTIDE SEQUENCE [LARGE SCALE GENOMIC DNA]</scope>
    <source>
        <strain>35000HP / ATCC 700724</strain>
    </source>
</reference>
<dbReference type="EMBL" id="AE017143">
    <property type="protein sequence ID" value="AAP95411.1"/>
    <property type="molecule type" value="Genomic_DNA"/>
</dbReference>
<dbReference type="RefSeq" id="WP_010944464.1">
    <property type="nucleotide sequence ID" value="NC_002940.2"/>
</dbReference>
<dbReference type="SMR" id="Q7VNP1"/>
<dbReference type="STRING" id="233412.HD_0449"/>
<dbReference type="KEGG" id="hdu:HD_0449"/>
<dbReference type="eggNOG" id="COG2901">
    <property type="taxonomic scope" value="Bacteria"/>
</dbReference>
<dbReference type="HOGENOM" id="CLU_158040_3_0_6"/>
<dbReference type="OrthoDB" id="9802388at2"/>
<dbReference type="Proteomes" id="UP000001022">
    <property type="component" value="Chromosome"/>
</dbReference>
<dbReference type="GO" id="GO:0003700">
    <property type="term" value="F:DNA-binding transcription factor activity"/>
    <property type="evidence" value="ECO:0007669"/>
    <property type="project" value="UniProtKB-UniRule"/>
</dbReference>
<dbReference type="GO" id="GO:0043565">
    <property type="term" value="F:sequence-specific DNA binding"/>
    <property type="evidence" value="ECO:0007669"/>
    <property type="project" value="InterPro"/>
</dbReference>
<dbReference type="FunFam" id="1.10.10.60:FF:000006">
    <property type="entry name" value="DNA-binding protein Fis"/>
    <property type="match status" value="1"/>
</dbReference>
<dbReference type="Gene3D" id="1.10.10.60">
    <property type="entry name" value="Homeodomain-like"/>
    <property type="match status" value="1"/>
</dbReference>
<dbReference type="HAMAP" id="MF_00166">
    <property type="entry name" value="DNA_binding_Fis"/>
    <property type="match status" value="1"/>
</dbReference>
<dbReference type="InterPro" id="IPR005412">
    <property type="entry name" value="Fis_DNA-bd"/>
</dbReference>
<dbReference type="InterPro" id="IPR009057">
    <property type="entry name" value="Homeodomain-like_sf"/>
</dbReference>
<dbReference type="InterPro" id="IPR002197">
    <property type="entry name" value="HTH_Fis"/>
</dbReference>
<dbReference type="InterPro" id="IPR050207">
    <property type="entry name" value="Trans_regulatory_Fis"/>
</dbReference>
<dbReference type="NCBIfam" id="NF001659">
    <property type="entry name" value="PRK00430.1"/>
    <property type="match status" value="1"/>
</dbReference>
<dbReference type="PANTHER" id="PTHR47918">
    <property type="entry name" value="DNA-BINDING PROTEIN FIS"/>
    <property type="match status" value="1"/>
</dbReference>
<dbReference type="PANTHER" id="PTHR47918:SF1">
    <property type="entry name" value="DNA-BINDING PROTEIN FIS"/>
    <property type="match status" value="1"/>
</dbReference>
<dbReference type="Pfam" id="PF02954">
    <property type="entry name" value="HTH_8"/>
    <property type="match status" value="1"/>
</dbReference>
<dbReference type="PIRSF" id="PIRSF002097">
    <property type="entry name" value="DNA-binding_Fis"/>
    <property type="match status" value="1"/>
</dbReference>
<dbReference type="PRINTS" id="PR01591">
    <property type="entry name" value="DNABINDNGFIS"/>
</dbReference>
<dbReference type="PRINTS" id="PR01590">
    <property type="entry name" value="HTHFIS"/>
</dbReference>
<dbReference type="SUPFAM" id="SSF46689">
    <property type="entry name" value="Homeodomain-like"/>
    <property type="match status" value="1"/>
</dbReference>
<gene>
    <name evidence="1" type="primary">fis</name>
    <name type="ordered locus">HD_0449</name>
</gene>
<comment type="function">
    <text evidence="1">Activates ribosomal RNA transcription. Plays a direct role in upstream activation of rRNA promoters.</text>
</comment>
<comment type="subunit">
    <text evidence="1">Homodimer.</text>
</comment>
<comment type="similarity">
    <text evidence="1">Belongs to the transcriptional regulatory Fis family.</text>
</comment>
<keyword id="KW-0010">Activator</keyword>
<keyword id="KW-0238">DNA-binding</keyword>
<keyword id="KW-1185">Reference proteome</keyword>
<keyword id="KW-0804">Transcription</keyword>
<keyword id="KW-0805">Transcription regulation</keyword>
<name>FIS_HAEDU</name>
<sequence length="98" mass="11090">MLEQQPAQNPLTVSMLNAQAQQVNKPLRDNVKAALKNYLSQLNGEDPTELYELVLSEIEHPMLDMVMQYTRGNQTRAATMLGINRGTLRKKLKKYGMG</sequence>
<organism>
    <name type="scientific">Haemophilus ducreyi (strain 35000HP / ATCC 700724)</name>
    <dbReference type="NCBI Taxonomy" id="233412"/>
    <lineage>
        <taxon>Bacteria</taxon>
        <taxon>Pseudomonadati</taxon>
        <taxon>Pseudomonadota</taxon>
        <taxon>Gammaproteobacteria</taxon>
        <taxon>Pasteurellales</taxon>
        <taxon>Pasteurellaceae</taxon>
        <taxon>Haemophilus</taxon>
    </lineage>
</organism>
<feature type="chain" id="PRO_0000203883" description="DNA-binding protein Fis">
    <location>
        <begin position="1"/>
        <end position="98"/>
    </location>
</feature>
<feature type="DNA-binding region" description="H-T-H motif" evidence="1">
    <location>
        <begin position="74"/>
        <end position="93"/>
    </location>
</feature>
<proteinExistence type="inferred from homology"/>
<accession>Q7VNP1</accession>
<protein>
    <recommendedName>
        <fullName evidence="1">DNA-binding protein Fis</fullName>
    </recommendedName>
</protein>